<accession>Q32CC4</accession>
<evidence type="ECO:0000255" key="1">
    <source>
        <dbReference type="HAMAP-Rule" id="MF_00817"/>
    </source>
</evidence>
<comment type="function">
    <text evidence="1">Catalyzes the NADPH-dependent reduction of 7-cyano-7-deazaguanine (preQ0) to 7-aminomethyl-7-deazaguanine (preQ1).</text>
</comment>
<comment type="catalytic activity">
    <reaction evidence="1">
        <text>7-aminomethyl-7-carbaguanine + 2 NADP(+) = 7-cyano-7-deazaguanine + 2 NADPH + 3 H(+)</text>
        <dbReference type="Rhea" id="RHEA:13409"/>
        <dbReference type="ChEBI" id="CHEBI:15378"/>
        <dbReference type="ChEBI" id="CHEBI:45075"/>
        <dbReference type="ChEBI" id="CHEBI:57783"/>
        <dbReference type="ChEBI" id="CHEBI:58349"/>
        <dbReference type="ChEBI" id="CHEBI:58703"/>
        <dbReference type="EC" id="1.7.1.13"/>
    </reaction>
</comment>
<comment type="pathway">
    <text evidence="1">tRNA modification; tRNA-queuosine biosynthesis.</text>
</comment>
<comment type="subunit">
    <text evidence="1">Homodimer.</text>
</comment>
<comment type="subcellular location">
    <subcellularLocation>
        <location evidence="1">Cytoplasm</location>
    </subcellularLocation>
</comment>
<comment type="similarity">
    <text evidence="1">Belongs to the GTP cyclohydrolase I family. QueF type 2 subfamily.</text>
</comment>
<keyword id="KW-0963">Cytoplasm</keyword>
<keyword id="KW-0521">NADP</keyword>
<keyword id="KW-0560">Oxidoreductase</keyword>
<keyword id="KW-0671">Queuosine biosynthesis</keyword>
<keyword id="KW-1185">Reference proteome</keyword>
<feature type="chain" id="PRO_0000247720" description="NADPH-dependent 7-cyano-7-deazaguanine reductase">
    <location>
        <begin position="1"/>
        <end position="282"/>
    </location>
</feature>
<feature type="active site" description="Thioimide intermediate" evidence="1">
    <location>
        <position position="190"/>
    </location>
</feature>
<feature type="active site" description="Proton donor" evidence="1">
    <location>
        <position position="197"/>
    </location>
</feature>
<feature type="binding site" evidence="1">
    <location>
        <begin position="88"/>
        <end position="90"/>
    </location>
    <ligand>
        <name>substrate</name>
    </ligand>
</feature>
<feature type="binding site" evidence="1">
    <location>
        <begin position="90"/>
        <end position="91"/>
    </location>
    <ligand>
        <name>NADPH</name>
        <dbReference type="ChEBI" id="CHEBI:57783"/>
    </ligand>
</feature>
<feature type="binding site" evidence="1">
    <location>
        <begin position="229"/>
        <end position="230"/>
    </location>
    <ligand>
        <name>substrate</name>
    </ligand>
</feature>
<feature type="binding site" evidence="1">
    <location>
        <begin position="258"/>
        <end position="259"/>
    </location>
    <ligand>
        <name>NADPH</name>
        <dbReference type="ChEBI" id="CHEBI:57783"/>
    </ligand>
</feature>
<sequence length="282" mass="32431">MSSYANHQALAGLTLGKSTDYRDTYDASLLQGVPRSLNRDPLGLKADNLPFHGADIWTLYELSWLNAKGLPQVAVGHVELDYTSVNLIESKSFKLYLNSFNQTSFNNWDEVLKTLERDLSTCAQGKVSVALYRLDELEGQPIGHFNGTCIDDQDITIDNYEFTTDYLENATCGEKVVEETLVSHLLKSNCLITHQPDWGSIQIQYRGRQIDREKLLRYLVSFRHHNEFHEQCVERIFNDLLRFCQPEKLSVYARYTRRGGLDINPWRSNSDFVPSTTRLVRQ</sequence>
<name>QUEF_SHIDS</name>
<protein>
    <recommendedName>
        <fullName evidence="1">NADPH-dependent 7-cyano-7-deazaguanine reductase</fullName>
        <ecNumber evidence="1">1.7.1.13</ecNumber>
    </recommendedName>
    <alternativeName>
        <fullName evidence="1">7-cyano-7-carbaguanine reductase</fullName>
    </alternativeName>
    <alternativeName>
        <fullName evidence="1">NADPH-dependent nitrile oxidoreductase</fullName>
    </alternativeName>
    <alternativeName>
        <fullName evidence="1">PreQ(0) reductase</fullName>
    </alternativeName>
</protein>
<gene>
    <name evidence="1" type="primary">queF</name>
    <name type="ordered locus">SDY_3011</name>
</gene>
<organism>
    <name type="scientific">Shigella dysenteriae serotype 1 (strain Sd197)</name>
    <dbReference type="NCBI Taxonomy" id="300267"/>
    <lineage>
        <taxon>Bacteria</taxon>
        <taxon>Pseudomonadati</taxon>
        <taxon>Pseudomonadota</taxon>
        <taxon>Gammaproteobacteria</taxon>
        <taxon>Enterobacterales</taxon>
        <taxon>Enterobacteriaceae</taxon>
        <taxon>Shigella</taxon>
    </lineage>
</organism>
<reference key="1">
    <citation type="journal article" date="2005" name="Nucleic Acids Res.">
        <title>Genome dynamics and diversity of Shigella species, the etiologic agents of bacillary dysentery.</title>
        <authorList>
            <person name="Yang F."/>
            <person name="Yang J."/>
            <person name="Zhang X."/>
            <person name="Chen L."/>
            <person name="Jiang Y."/>
            <person name="Yan Y."/>
            <person name="Tang X."/>
            <person name="Wang J."/>
            <person name="Xiong Z."/>
            <person name="Dong J."/>
            <person name="Xue Y."/>
            <person name="Zhu Y."/>
            <person name="Xu X."/>
            <person name="Sun L."/>
            <person name="Chen S."/>
            <person name="Nie H."/>
            <person name="Peng J."/>
            <person name="Xu J."/>
            <person name="Wang Y."/>
            <person name="Yuan Z."/>
            <person name="Wen Y."/>
            <person name="Yao Z."/>
            <person name="Shen Y."/>
            <person name="Qiang B."/>
            <person name="Hou Y."/>
            <person name="Yu J."/>
            <person name="Jin Q."/>
        </authorList>
    </citation>
    <scope>NUCLEOTIDE SEQUENCE [LARGE SCALE GENOMIC DNA]</scope>
    <source>
        <strain>Sd197</strain>
    </source>
</reference>
<proteinExistence type="inferred from homology"/>
<dbReference type="EC" id="1.7.1.13" evidence="1"/>
<dbReference type="EMBL" id="CP000034">
    <property type="protein sequence ID" value="ABB63031.1"/>
    <property type="molecule type" value="Genomic_DNA"/>
</dbReference>
<dbReference type="RefSeq" id="WP_000100402.1">
    <property type="nucleotide sequence ID" value="NC_007606.1"/>
</dbReference>
<dbReference type="RefSeq" id="YP_404522.1">
    <property type="nucleotide sequence ID" value="NC_007606.1"/>
</dbReference>
<dbReference type="SMR" id="Q32CC4"/>
<dbReference type="STRING" id="300267.SDY_3011"/>
<dbReference type="EnsemblBacteria" id="ABB63031">
    <property type="protein sequence ID" value="ABB63031"/>
    <property type="gene ID" value="SDY_3011"/>
</dbReference>
<dbReference type="KEGG" id="sdy:SDY_3011"/>
<dbReference type="PATRIC" id="fig|300267.13.peg.3615"/>
<dbReference type="HOGENOM" id="CLU_054738_0_0_6"/>
<dbReference type="UniPathway" id="UPA00392"/>
<dbReference type="Proteomes" id="UP000002716">
    <property type="component" value="Chromosome"/>
</dbReference>
<dbReference type="GO" id="GO:0005737">
    <property type="term" value="C:cytoplasm"/>
    <property type="evidence" value="ECO:0007669"/>
    <property type="project" value="UniProtKB-SubCell"/>
</dbReference>
<dbReference type="GO" id="GO:0033739">
    <property type="term" value="F:preQ1 synthase activity"/>
    <property type="evidence" value="ECO:0007669"/>
    <property type="project" value="UniProtKB-UniRule"/>
</dbReference>
<dbReference type="GO" id="GO:0008616">
    <property type="term" value="P:queuosine biosynthetic process"/>
    <property type="evidence" value="ECO:0007669"/>
    <property type="project" value="UniProtKB-UniRule"/>
</dbReference>
<dbReference type="GO" id="GO:0006400">
    <property type="term" value="P:tRNA modification"/>
    <property type="evidence" value="ECO:0007669"/>
    <property type="project" value="UniProtKB-UniRule"/>
</dbReference>
<dbReference type="FunFam" id="3.30.1130.10:FF:000004">
    <property type="entry name" value="NADPH-dependent 7-cyano-7-deazaguanine reductase"/>
    <property type="match status" value="1"/>
</dbReference>
<dbReference type="Gene3D" id="3.30.1130.10">
    <property type="match status" value="2"/>
</dbReference>
<dbReference type="HAMAP" id="MF_00817">
    <property type="entry name" value="QueF_type2"/>
    <property type="match status" value="1"/>
</dbReference>
<dbReference type="InterPro" id="IPR043133">
    <property type="entry name" value="GTP-CH-I_C/QueF"/>
</dbReference>
<dbReference type="InterPro" id="IPR050084">
    <property type="entry name" value="NADPH_dep_7-cyano-7-deazaG_red"/>
</dbReference>
<dbReference type="InterPro" id="IPR029500">
    <property type="entry name" value="QueF"/>
</dbReference>
<dbReference type="InterPro" id="IPR029139">
    <property type="entry name" value="QueF_N"/>
</dbReference>
<dbReference type="InterPro" id="IPR016428">
    <property type="entry name" value="QueF_type2"/>
</dbReference>
<dbReference type="NCBIfam" id="TIGR03138">
    <property type="entry name" value="QueF"/>
    <property type="match status" value="1"/>
</dbReference>
<dbReference type="PANTHER" id="PTHR34354">
    <property type="entry name" value="NADPH-DEPENDENT 7-CYANO-7-DEAZAGUANINE REDUCTASE"/>
    <property type="match status" value="1"/>
</dbReference>
<dbReference type="PANTHER" id="PTHR34354:SF1">
    <property type="entry name" value="NADPH-DEPENDENT 7-CYANO-7-DEAZAGUANINE REDUCTASE"/>
    <property type="match status" value="1"/>
</dbReference>
<dbReference type="Pfam" id="PF14489">
    <property type="entry name" value="QueF"/>
    <property type="match status" value="1"/>
</dbReference>
<dbReference type="Pfam" id="PF14819">
    <property type="entry name" value="QueF_N"/>
    <property type="match status" value="1"/>
</dbReference>
<dbReference type="PIRSF" id="PIRSF004750">
    <property type="entry name" value="Nitrile_oxidored_YqcD_prd"/>
    <property type="match status" value="1"/>
</dbReference>
<dbReference type="SUPFAM" id="SSF55620">
    <property type="entry name" value="Tetrahydrobiopterin biosynthesis enzymes-like"/>
    <property type="match status" value="1"/>
</dbReference>